<evidence type="ECO:0000255" key="1"/>
<evidence type="ECO:0000305" key="2"/>
<proteinExistence type="inferred from homology"/>
<protein>
    <recommendedName>
        <fullName>Serpentine receptor class alpha-6</fullName>
        <shortName>Protein sra-6</shortName>
    </recommendedName>
</protein>
<feature type="chain" id="PRO_0000104472" description="Serpentine receptor class alpha-6">
    <location>
        <begin position="1"/>
        <end position="329"/>
    </location>
</feature>
<feature type="transmembrane region" description="Helical" evidence="1">
    <location>
        <begin position="26"/>
        <end position="46"/>
    </location>
</feature>
<feature type="transmembrane region" description="Helical" evidence="1">
    <location>
        <begin position="68"/>
        <end position="88"/>
    </location>
</feature>
<feature type="transmembrane region" description="Helical" evidence="1">
    <location>
        <begin position="104"/>
        <end position="124"/>
    </location>
</feature>
<feature type="transmembrane region" description="Helical" evidence="1">
    <location>
        <begin position="143"/>
        <end position="163"/>
    </location>
</feature>
<feature type="transmembrane region" description="Helical" evidence="1">
    <location>
        <begin position="187"/>
        <end position="207"/>
    </location>
</feature>
<feature type="transmembrane region" description="Helical" evidence="1">
    <location>
        <begin position="238"/>
        <end position="258"/>
    </location>
</feature>
<feature type="transmembrane region" description="Helical" evidence="1">
    <location>
        <begin position="273"/>
        <end position="293"/>
    </location>
</feature>
<gene>
    <name type="primary">sra-6</name>
    <name type="ORF">AH6.10</name>
</gene>
<name>SRA6_CAEEL</name>
<organism>
    <name type="scientific">Caenorhabditis elegans</name>
    <dbReference type="NCBI Taxonomy" id="6239"/>
    <lineage>
        <taxon>Eukaryota</taxon>
        <taxon>Metazoa</taxon>
        <taxon>Ecdysozoa</taxon>
        <taxon>Nematoda</taxon>
        <taxon>Chromadorea</taxon>
        <taxon>Rhabditida</taxon>
        <taxon>Rhabditina</taxon>
        <taxon>Rhabditomorpha</taxon>
        <taxon>Rhabditoidea</taxon>
        <taxon>Rhabditidae</taxon>
        <taxon>Peloderinae</taxon>
        <taxon>Caenorhabditis</taxon>
    </lineage>
</organism>
<sequence length="329" mass="37951">MSNLSCAAPDVLERLDSFNMKLSQFVDLLAIILAFFASYFAIKIVINQSFFELSTKILLLQNLFYTNLYQISYGIEAIGMLYRGFFMLSEPCSILQSETSCAPYFKVLMIGTSGMIFGQTGLLIERAFATFATTYKTKKSVYIGVCISLIVLVCSTSSGFIILWDDPLEGWTIGCFAVSKSVVPRFNLFSILSTVLTLFNLIVSIFIQRYNKRFEFETRFKVGARFQKQELIESTGAICFLALSQFLWMFMYSFGILILRIIREDILPSTFYFWIAWCYTMPFIALMFPVLLIYRIRKTRARRTEKMKGITTEKQTQDDHIKQINAMWT</sequence>
<accession>Q09208</accession>
<reference key="1">
    <citation type="journal article" date="1998" name="Science">
        <title>Genome sequence of the nematode C. elegans: a platform for investigating biology.</title>
        <authorList>
            <consortium name="The C. elegans sequencing consortium"/>
        </authorList>
    </citation>
    <scope>NUCLEOTIDE SEQUENCE [LARGE SCALE GENOMIC DNA]</scope>
    <source>
        <strain>Bristol N2</strain>
    </source>
</reference>
<keyword id="KW-0472">Membrane</keyword>
<keyword id="KW-1185">Reference proteome</keyword>
<keyword id="KW-0812">Transmembrane</keyword>
<keyword id="KW-1133">Transmembrane helix</keyword>
<dbReference type="EMBL" id="Z48009">
    <property type="protein sequence ID" value="CAA88083.1"/>
    <property type="molecule type" value="Genomic_DNA"/>
</dbReference>
<dbReference type="PIR" id="T18619">
    <property type="entry name" value="T18619"/>
</dbReference>
<dbReference type="RefSeq" id="NP_496052.1">
    <property type="nucleotide sequence ID" value="NM_063651.2"/>
</dbReference>
<dbReference type="BioGRID" id="56270">
    <property type="interactions" value="1"/>
</dbReference>
<dbReference type="FunCoup" id="Q09208">
    <property type="interactions" value="32"/>
</dbReference>
<dbReference type="STRING" id="6239.AH6.10.1"/>
<dbReference type="TCDB" id="9.A.14.23.1">
    <property type="family name" value="the g-protein-coupled receptor (gpcr) family"/>
</dbReference>
<dbReference type="PaxDb" id="6239-AH6.10"/>
<dbReference type="EnsemblMetazoa" id="AH6.10.1">
    <property type="protein sequence ID" value="AH6.10.1"/>
    <property type="gene ID" value="WBGene00005032"/>
</dbReference>
<dbReference type="GeneID" id="191777"/>
<dbReference type="KEGG" id="cel:CELE_AH6.10"/>
<dbReference type="UCSC" id="AH6.10">
    <property type="organism name" value="c. elegans"/>
</dbReference>
<dbReference type="AGR" id="WB:WBGene00005032"/>
<dbReference type="CTD" id="191777"/>
<dbReference type="WormBase" id="AH6.10">
    <property type="protein sequence ID" value="CE01451"/>
    <property type="gene ID" value="WBGene00005032"/>
    <property type="gene designation" value="sra-6"/>
</dbReference>
<dbReference type="eggNOG" id="ENOG502TFTJ">
    <property type="taxonomic scope" value="Eukaryota"/>
</dbReference>
<dbReference type="GeneTree" id="ENSGT00970000195848"/>
<dbReference type="HOGENOM" id="CLU_048025_0_1_1"/>
<dbReference type="InParanoid" id="Q09208"/>
<dbReference type="OMA" id="DAHCAPY"/>
<dbReference type="OrthoDB" id="5840330at2759"/>
<dbReference type="PhylomeDB" id="Q09208"/>
<dbReference type="PRO" id="PR:Q09208"/>
<dbReference type="Proteomes" id="UP000001940">
    <property type="component" value="Chromosome II"/>
</dbReference>
<dbReference type="Bgee" id="WBGene00005032">
    <property type="expression patterns" value="Expressed in larva"/>
</dbReference>
<dbReference type="GO" id="GO:0005929">
    <property type="term" value="C:cilium"/>
    <property type="evidence" value="ECO:0000314"/>
    <property type="project" value="UniProtKB"/>
</dbReference>
<dbReference type="GO" id="GO:0016020">
    <property type="term" value="C:membrane"/>
    <property type="evidence" value="ECO:0007669"/>
    <property type="project" value="UniProtKB-SubCell"/>
</dbReference>
<dbReference type="GO" id="GO:0004930">
    <property type="term" value="F:G protein-coupled receptor activity"/>
    <property type="evidence" value="ECO:0007669"/>
    <property type="project" value="InterPro"/>
</dbReference>
<dbReference type="GO" id="GO:0004984">
    <property type="term" value="F:olfactory receptor activity"/>
    <property type="evidence" value="ECO:0000318"/>
    <property type="project" value="GO_Central"/>
</dbReference>
<dbReference type="GO" id="GO:0050907">
    <property type="term" value="P:detection of chemical stimulus involved in sensory perception"/>
    <property type="evidence" value="ECO:0000318"/>
    <property type="project" value="GO_Central"/>
</dbReference>
<dbReference type="InterPro" id="IPR000344">
    <property type="entry name" value="7TM_GPCR_serpentine_rcpt_Sra"/>
</dbReference>
<dbReference type="InterPro" id="IPR051080">
    <property type="entry name" value="Nematode_rcpt-like_serp_alpha"/>
</dbReference>
<dbReference type="PANTHER" id="PTHR31357:SF5">
    <property type="entry name" value="SERPENTINE RECEPTOR CLASS ALPHA-1-RELATED"/>
    <property type="match status" value="1"/>
</dbReference>
<dbReference type="PANTHER" id="PTHR31357">
    <property type="entry name" value="SERPENTINE RECEPTOR CLASS ALPHA-10"/>
    <property type="match status" value="1"/>
</dbReference>
<dbReference type="Pfam" id="PF02117">
    <property type="entry name" value="7TM_GPCR_Sra"/>
    <property type="match status" value="1"/>
</dbReference>
<dbReference type="PRINTS" id="PR00697">
    <property type="entry name" value="TMPROTEINSRA"/>
</dbReference>
<comment type="subcellular location">
    <subcellularLocation>
        <location evidence="2">Membrane</location>
        <topology evidence="2">Multi-pass membrane protein</topology>
    </subcellularLocation>
</comment>
<comment type="similarity">
    <text evidence="2">Belongs to the nematode receptor-like protein sra family.</text>
</comment>